<comment type="function">
    <text>Involved in oxygen transport from the lung to the various peripheral tissues.</text>
</comment>
<comment type="subunit">
    <text>Heterotetramer of two alpha chains and two beta chains.</text>
</comment>
<comment type="tissue specificity">
    <text>Red blood cells.</text>
</comment>
<comment type="similarity">
    <text evidence="3">Belongs to the globin family.</text>
</comment>
<sequence>VHLTPEEKTAVTTLWGKVNVDEVGGEALGRLLVVYPWTQRFFESFGDLSSPDAVMGNPKVKAHGKKVLGAFSDGLAHLDNLKGTFAQLSELHCDKLHVDPENFKLLGNVLVCVLAHHFGKEFTPQVQAAYQKVVAGVANALAHKYH</sequence>
<feature type="chain" id="PRO_0000052919" description="Hemoglobin subunit beta">
    <location>
        <begin position="1"/>
        <end position="146"/>
    </location>
</feature>
<feature type="domain" description="Globin" evidence="3">
    <location>
        <begin position="2"/>
        <end position="146"/>
    </location>
</feature>
<feature type="binding site" description="distal binding residue">
    <location>
        <position position="63"/>
    </location>
    <ligand>
        <name>heme b</name>
        <dbReference type="ChEBI" id="CHEBI:60344"/>
    </ligand>
    <ligandPart>
        <name>Fe</name>
        <dbReference type="ChEBI" id="CHEBI:18248"/>
    </ligandPart>
</feature>
<feature type="binding site" description="proximal binding residue">
    <location>
        <position position="92"/>
    </location>
    <ligand>
        <name>heme b</name>
        <dbReference type="ChEBI" id="CHEBI:60344"/>
    </ligand>
    <ligandPart>
        <name>Fe</name>
        <dbReference type="ChEBI" id="CHEBI:18248"/>
    </ligandPart>
</feature>
<feature type="modified residue" description="N-acetylvaline" evidence="1">
    <location>
        <position position="1"/>
    </location>
</feature>
<feature type="modified residue" description="Phosphothreonine" evidence="2">
    <location>
        <position position="12"/>
    </location>
</feature>
<feature type="modified residue" description="Phosphoserine" evidence="2">
    <location>
        <position position="44"/>
    </location>
</feature>
<feature type="modified residue" description="N6-acetyllysine" evidence="2">
    <location>
        <position position="59"/>
    </location>
</feature>
<feature type="modified residue" description="N6-acetyllysine" evidence="2">
    <location>
        <position position="82"/>
    </location>
</feature>
<feature type="modified residue" description="S-nitrosocysteine" evidence="2">
    <location>
        <position position="93"/>
    </location>
</feature>
<feature type="modified residue" description="N6-acetyllysine" evidence="2">
    <location>
        <position position="144"/>
    </location>
</feature>
<gene>
    <name type="primary">HBB</name>
</gene>
<proteinExistence type="evidence at protein level"/>
<evidence type="ECO:0000250" key="1">
    <source>
        <dbReference type="UniProtKB" id="P02086"/>
    </source>
</evidence>
<evidence type="ECO:0000250" key="2">
    <source>
        <dbReference type="UniProtKB" id="P68871"/>
    </source>
</evidence>
<evidence type="ECO:0000255" key="3">
    <source>
        <dbReference type="PROSITE-ProRule" id="PRU00238"/>
    </source>
</evidence>
<protein>
    <recommendedName>
        <fullName>Hemoglobin subunit beta</fullName>
    </recommendedName>
    <alternativeName>
        <fullName>Beta-globin</fullName>
    </alternativeName>
    <alternativeName>
        <fullName>Hemoglobin beta chain</fullName>
    </alternativeName>
</protein>
<dbReference type="PIR" id="B02252">
    <property type="entry name" value="HBMKG"/>
</dbReference>
<dbReference type="SMR" id="P02028"/>
<dbReference type="GO" id="GO:0072562">
    <property type="term" value="C:blood microparticle"/>
    <property type="evidence" value="ECO:0007669"/>
    <property type="project" value="TreeGrafter"/>
</dbReference>
<dbReference type="GO" id="GO:0031838">
    <property type="term" value="C:haptoglobin-hemoglobin complex"/>
    <property type="evidence" value="ECO:0007669"/>
    <property type="project" value="TreeGrafter"/>
</dbReference>
<dbReference type="GO" id="GO:0005833">
    <property type="term" value="C:hemoglobin complex"/>
    <property type="evidence" value="ECO:0007669"/>
    <property type="project" value="InterPro"/>
</dbReference>
<dbReference type="GO" id="GO:0031720">
    <property type="term" value="F:haptoglobin binding"/>
    <property type="evidence" value="ECO:0007669"/>
    <property type="project" value="TreeGrafter"/>
</dbReference>
<dbReference type="GO" id="GO:0020037">
    <property type="term" value="F:heme binding"/>
    <property type="evidence" value="ECO:0007669"/>
    <property type="project" value="InterPro"/>
</dbReference>
<dbReference type="GO" id="GO:0031721">
    <property type="term" value="F:hemoglobin alpha binding"/>
    <property type="evidence" value="ECO:0007669"/>
    <property type="project" value="TreeGrafter"/>
</dbReference>
<dbReference type="GO" id="GO:0046872">
    <property type="term" value="F:metal ion binding"/>
    <property type="evidence" value="ECO:0007669"/>
    <property type="project" value="UniProtKB-KW"/>
</dbReference>
<dbReference type="GO" id="GO:0043177">
    <property type="term" value="F:organic acid binding"/>
    <property type="evidence" value="ECO:0007669"/>
    <property type="project" value="TreeGrafter"/>
</dbReference>
<dbReference type="GO" id="GO:0019825">
    <property type="term" value="F:oxygen binding"/>
    <property type="evidence" value="ECO:0007669"/>
    <property type="project" value="InterPro"/>
</dbReference>
<dbReference type="GO" id="GO:0005344">
    <property type="term" value="F:oxygen carrier activity"/>
    <property type="evidence" value="ECO:0007669"/>
    <property type="project" value="UniProtKB-KW"/>
</dbReference>
<dbReference type="GO" id="GO:0004601">
    <property type="term" value="F:peroxidase activity"/>
    <property type="evidence" value="ECO:0007669"/>
    <property type="project" value="TreeGrafter"/>
</dbReference>
<dbReference type="GO" id="GO:0042744">
    <property type="term" value="P:hydrogen peroxide catabolic process"/>
    <property type="evidence" value="ECO:0007669"/>
    <property type="project" value="TreeGrafter"/>
</dbReference>
<dbReference type="CDD" id="cd08925">
    <property type="entry name" value="Hb-beta-like"/>
    <property type="match status" value="1"/>
</dbReference>
<dbReference type="FunFam" id="1.10.490.10:FF:000001">
    <property type="entry name" value="Hemoglobin subunit beta"/>
    <property type="match status" value="1"/>
</dbReference>
<dbReference type="Gene3D" id="1.10.490.10">
    <property type="entry name" value="Globins"/>
    <property type="match status" value="1"/>
</dbReference>
<dbReference type="InterPro" id="IPR000971">
    <property type="entry name" value="Globin"/>
</dbReference>
<dbReference type="InterPro" id="IPR009050">
    <property type="entry name" value="Globin-like_sf"/>
</dbReference>
<dbReference type="InterPro" id="IPR012292">
    <property type="entry name" value="Globin/Proto"/>
</dbReference>
<dbReference type="InterPro" id="IPR002337">
    <property type="entry name" value="Hemoglobin_b"/>
</dbReference>
<dbReference type="InterPro" id="IPR050056">
    <property type="entry name" value="Hemoglobin_oxygen_transport"/>
</dbReference>
<dbReference type="PANTHER" id="PTHR11442">
    <property type="entry name" value="HEMOGLOBIN FAMILY MEMBER"/>
    <property type="match status" value="1"/>
</dbReference>
<dbReference type="PANTHER" id="PTHR11442:SF42">
    <property type="entry name" value="HEMOGLOBIN SUBUNIT BETA"/>
    <property type="match status" value="1"/>
</dbReference>
<dbReference type="Pfam" id="PF00042">
    <property type="entry name" value="Globin"/>
    <property type="match status" value="1"/>
</dbReference>
<dbReference type="PRINTS" id="PR00814">
    <property type="entry name" value="BETAHAEM"/>
</dbReference>
<dbReference type="SUPFAM" id="SSF46458">
    <property type="entry name" value="Globin-like"/>
    <property type="match status" value="1"/>
</dbReference>
<dbReference type="PROSITE" id="PS01033">
    <property type="entry name" value="GLOBIN"/>
    <property type="match status" value="1"/>
</dbReference>
<keyword id="KW-0007">Acetylation</keyword>
<keyword id="KW-0903">Direct protein sequencing</keyword>
<keyword id="KW-0349">Heme</keyword>
<keyword id="KW-0408">Iron</keyword>
<keyword id="KW-0479">Metal-binding</keyword>
<keyword id="KW-0561">Oxygen transport</keyword>
<keyword id="KW-0597">Phosphoprotein</keyword>
<keyword id="KW-0702">S-nitrosylation</keyword>
<keyword id="KW-0813">Transport</keyword>
<reference key="1">
    <citation type="journal article" date="1973" name="Hoppe-Seyler's Z. Physiol. Chem.">
        <title>The amino acid sequences of the alpha and beta polypeptide chains of adult hemoglobin of the savannah monkey (Cereopithecus aethiops).</title>
        <authorList>
            <person name="Matsuda G."/>
            <person name="Maita T."/>
            <person name="Watanabe B."/>
            <person name="Araya A."/>
            <person name="Morokuma K."/>
            <person name="Goodman M."/>
            <person name="Prychodko W."/>
        </authorList>
    </citation>
    <scope>PROTEIN SEQUENCE</scope>
</reference>
<organism>
    <name type="scientific">Chlorocebus aethiops</name>
    <name type="common">Green monkey</name>
    <name type="synonym">Cercopithecus aethiops</name>
    <dbReference type="NCBI Taxonomy" id="9534"/>
    <lineage>
        <taxon>Eukaryota</taxon>
        <taxon>Metazoa</taxon>
        <taxon>Chordata</taxon>
        <taxon>Craniata</taxon>
        <taxon>Vertebrata</taxon>
        <taxon>Euteleostomi</taxon>
        <taxon>Mammalia</taxon>
        <taxon>Eutheria</taxon>
        <taxon>Euarchontoglires</taxon>
        <taxon>Primates</taxon>
        <taxon>Haplorrhini</taxon>
        <taxon>Catarrhini</taxon>
        <taxon>Cercopithecidae</taxon>
        <taxon>Cercopithecinae</taxon>
        <taxon>Chlorocebus</taxon>
    </lineage>
</organism>
<name>HBB_CHLAE</name>
<accession>P02028</accession>